<comment type="function">
    <text evidence="1">One of the primary rRNA binding proteins. Required for association of the 30S and 50S subunits to form the 70S ribosome, for tRNA binding and peptide bond formation. It has been suggested to have peptidyltransferase activity; this is somewhat controversial. Makes several contacts with the 16S rRNA in the 70S ribosome.</text>
</comment>
<comment type="subunit">
    <text evidence="1">Part of the 50S ribosomal subunit. Forms a bridge to the 30S subunit in the 70S ribosome.</text>
</comment>
<comment type="similarity">
    <text evidence="1">Belongs to the universal ribosomal protein uL2 family.</text>
</comment>
<proteinExistence type="inferred from homology"/>
<dbReference type="EMBL" id="CP000608">
    <property type="protein sequence ID" value="ABO47430.1"/>
    <property type="molecule type" value="Genomic_DNA"/>
</dbReference>
<dbReference type="RefSeq" id="WP_003027197.1">
    <property type="nucleotide sequence ID" value="NC_009257.1"/>
</dbReference>
<dbReference type="SMR" id="A4IZT1"/>
<dbReference type="GeneID" id="75264258"/>
<dbReference type="KEGG" id="ftw:FTW_1754"/>
<dbReference type="HOGENOM" id="CLU_036235_2_1_6"/>
<dbReference type="GO" id="GO:0015934">
    <property type="term" value="C:large ribosomal subunit"/>
    <property type="evidence" value="ECO:0007669"/>
    <property type="project" value="InterPro"/>
</dbReference>
<dbReference type="GO" id="GO:0019843">
    <property type="term" value="F:rRNA binding"/>
    <property type="evidence" value="ECO:0007669"/>
    <property type="project" value="UniProtKB-UniRule"/>
</dbReference>
<dbReference type="GO" id="GO:0003735">
    <property type="term" value="F:structural constituent of ribosome"/>
    <property type="evidence" value="ECO:0007669"/>
    <property type="project" value="InterPro"/>
</dbReference>
<dbReference type="GO" id="GO:0016740">
    <property type="term" value="F:transferase activity"/>
    <property type="evidence" value="ECO:0007669"/>
    <property type="project" value="InterPro"/>
</dbReference>
<dbReference type="GO" id="GO:0002181">
    <property type="term" value="P:cytoplasmic translation"/>
    <property type="evidence" value="ECO:0007669"/>
    <property type="project" value="TreeGrafter"/>
</dbReference>
<dbReference type="FunFam" id="2.30.30.30:FF:000001">
    <property type="entry name" value="50S ribosomal protein L2"/>
    <property type="match status" value="1"/>
</dbReference>
<dbReference type="FunFam" id="2.40.50.140:FF:000003">
    <property type="entry name" value="50S ribosomal protein L2"/>
    <property type="match status" value="1"/>
</dbReference>
<dbReference type="FunFam" id="4.10.950.10:FF:000001">
    <property type="entry name" value="50S ribosomal protein L2"/>
    <property type="match status" value="1"/>
</dbReference>
<dbReference type="Gene3D" id="2.30.30.30">
    <property type="match status" value="1"/>
</dbReference>
<dbReference type="Gene3D" id="2.40.50.140">
    <property type="entry name" value="Nucleic acid-binding proteins"/>
    <property type="match status" value="1"/>
</dbReference>
<dbReference type="Gene3D" id="4.10.950.10">
    <property type="entry name" value="Ribosomal protein L2, domain 3"/>
    <property type="match status" value="1"/>
</dbReference>
<dbReference type="HAMAP" id="MF_01320_B">
    <property type="entry name" value="Ribosomal_uL2_B"/>
    <property type="match status" value="1"/>
</dbReference>
<dbReference type="InterPro" id="IPR012340">
    <property type="entry name" value="NA-bd_OB-fold"/>
</dbReference>
<dbReference type="InterPro" id="IPR014722">
    <property type="entry name" value="Rib_uL2_dom2"/>
</dbReference>
<dbReference type="InterPro" id="IPR002171">
    <property type="entry name" value="Ribosomal_uL2"/>
</dbReference>
<dbReference type="InterPro" id="IPR005880">
    <property type="entry name" value="Ribosomal_uL2_bac/org-type"/>
</dbReference>
<dbReference type="InterPro" id="IPR022669">
    <property type="entry name" value="Ribosomal_uL2_C"/>
</dbReference>
<dbReference type="InterPro" id="IPR022671">
    <property type="entry name" value="Ribosomal_uL2_CS"/>
</dbReference>
<dbReference type="InterPro" id="IPR014726">
    <property type="entry name" value="Ribosomal_uL2_dom3"/>
</dbReference>
<dbReference type="InterPro" id="IPR022666">
    <property type="entry name" value="Ribosomal_uL2_RNA-bd_dom"/>
</dbReference>
<dbReference type="InterPro" id="IPR008991">
    <property type="entry name" value="Translation_prot_SH3-like_sf"/>
</dbReference>
<dbReference type="NCBIfam" id="TIGR01171">
    <property type="entry name" value="rplB_bact"/>
    <property type="match status" value="1"/>
</dbReference>
<dbReference type="PANTHER" id="PTHR13691:SF5">
    <property type="entry name" value="LARGE RIBOSOMAL SUBUNIT PROTEIN UL2M"/>
    <property type="match status" value="1"/>
</dbReference>
<dbReference type="PANTHER" id="PTHR13691">
    <property type="entry name" value="RIBOSOMAL PROTEIN L2"/>
    <property type="match status" value="1"/>
</dbReference>
<dbReference type="Pfam" id="PF00181">
    <property type="entry name" value="Ribosomal_L2"/>
    <property type="match status" value="1"/>
</dbReference>
<dbReference type="Pfam" id="PF03947">
    <property type="entry name" value="Ribosomal_L2_C"/>
    <property type="match status" value="1"/>
</dbReference>
<dbReference type="PIRSF" id="PIRSF002158">
    <property type="entry name" value="Ribosomal_L2"/>
    <property type="match status" value="1"/>
</dbReference>
<dbReference type="SMART" id="SM01383">
    <property type="entry name" value="Ribosomal_L2"/>
    <property type="match status" value="1"/>
</dbReference>
<dbReference type="SMART" id="SM01382">
    <property type="entry name" value="Ribosomal_L2_C"/>
    <property type="match status" value="1"/>
</dbReference>
<dbReference type="SUPFAM" id="SSF50249">
    <property type="entry name" value="Nucleic acid-binding proteins"/>
    <property type="match status" value="1"/>
</dbReference>
<dbReference type="SUPFAM" id="SSF50104">
    <property type="entry name" value="Translation proteins SH3-like domain"/>
    <property type="match status" value="1"/>
</dbReference>
<dbReference type="PROSITE" id="PS00467">
    <property type="entry name" value="RIBOSOMAL_L2"/>
    <property type="match status" value="1"/>
</dbReference>
<gene>
    <name evidence="1" type="primary">rplB</name>
    <name type="ordered locus">FTW_1754</name>
</gene>
<feature type="chain" id="PRO_0000309921" description="Large ribosomal subunit protein uL2">
    <location>
        <begin position="1"/>
        <end position="274"/>
    </location>
</feature>
<feature type="region of interest" description="Disordered" evidence="2">
    <location>
        <begin position="224"/>
        <end position="274"/>
    </location>
</feature>
<feature type="compositionally biased region" description="Basic residues" evidence="2">
    <location>
        <begin position="257"/>
        <end position="274"/>
    </location>
</feature>
<protein>
    <recommendedName>
        <fullName evidence="1">Large ribosomal subunit protein uL2</fullName>
    </recommendedName>
    <alternativeName>
        <fullName evidence="3">50S ribosomal protein L2</fullName>
    </alternativeName>
</protein>
<sequence length="274" mass="30387">MIEIKKAKPTSPGRRHVVSVKNTELHTGKPFKGLVEVKKSKAGRNNTGRITVRHQGGGHKQHYRIVDFKRNKDDITAKVERIEYDPNRSANIALVLYADGERRYIVAPKGLKKDMSVISGEKVDVAVGNCMPLRNIPLGTVIHNIEMKPKKGAQMIRSAGTFAQLVGKDNAYAIIRLRSGEMRRVLLDCRAVIGVVSNSEHNLKSLGKAGAKRWRGIRPTVRGVAMNPVDHPHGGGEGRTSGGRHPVTPWGIPTKGYKTRRNKRSNKLIVQKRK</sequence>
<evidence type="ECO:0000255" key="1">
    <source>
        <dbReference type="HAMAP-Rule" id="MF_01320"/>
    </source>
</evidence>
<evidence type="ECO:0000256" key="2">
    <source>
        <dbReference type="SAM" id="MobiDB-lite"/>
    </source>
</evidence>
<evidence type="ECO:0000305" key="3"/>
<accession>A4IZT1</accession>
<organism>
    <name type="scientific">Francisella tularensis subsp. tularensis (strain WY96-3418)</name>
    <dbReference type="NCBI Taxonomy" id="418136"/>
    <lineage>
        <taxon>Bacteria</taxon>
        <taxon>Pseudomonadati</taxon>
        <taxon>Pseudomonadota</taxon>
        <taxon>Gammaproteobacteria</taxon>
        <taxon>Thiotrichales</taxon>
        <taxon>Francisellaceae</taxon>
        <taxon>Francisella</taxon>
    </lineage>
</organism>
<reference key="1">
    <citation type="journal article" date="2007" name="PLoS ONE">
        <title>Complete genomic characterization of a pathogenic A.II strain of Francisella tularensis subspecies tularensis.</title>
        <authorList>
            <person name="Beckstrom-Sternberg S.M."/>
            <person name="Auerbach R.K."/>
            <person name="Godbole S."/>
            <person name="Pearson J.V."/>
            <person name="Beckstrom-Sternberg J.S."/>
            <person name="Deng Z."/>
            <person name="Munk C."/>
            <person name="Kubota K."/>
            <person name="Zhou Y."/>
            <person name="Bruce D."/>
            <person name="Noronha J."/>
            <person name="Scheuermann R.H."/>
            <person name="Wang A."/>
            <person name="Wei X."/>
            <person name="Wang J."/>
            <person name="Hao J."/>
            <person name="Wagner D.M."/>
            <person name="Brettin T.S."/>
            <person name="Brown N."/>
            <person name="Gilna P."/>
            <person name="Keim P.S."/>
        </authorList>
    </citation>
    <scope>NUCLEOTIDE SEQUENCE [LARGE SCALE GENOMIC DNA]</scope>
    <source>
        <strain>WY96-3418</strain>
    </source>
</reference>
<keyword id="KW-0687">Ribonucleoprotein</keyword>
<keyword id="KW-0689">Ribosomal protein</keyword>
<keyword id="KW-0694">RNA-binding</keyword>
<keyword id="KW-0699">rRNA-binding</keyword>
<name>RL2_FRATW</name>